<proteinExistence type="evidence at protein level"/>
<evidence type="ECO:0000250" key="1"/>
<evidence type="ECO:0000255" key="2">
    <source>
        <dbReference type="PROSITE-ProRule" id="PRU00108"/>
    </source>
</evidence>
<evidence type="ECO:0000256" key="3">
    <source>
        <dbReference type="SAM" id="MobiDB-lite"/>
    </source>
</evidence>
<evidence type="ECO:0000269" key="4">
    <source>
    </source>
</evidence>
<dbReference type="EMBL" id="CR749372">
    <property type="protein sequence ID" value="CAH18225.1"/>
    <property type="molecule type" value="mRNA"/>
</dbReference>
<dbReference type="EMBL" id="Z83853">
    <property type="status" value="NOT_ANNOTATED_CDS"/>
    <property type="molecule type" value="Genomic_DNA"/>
</dbReference>
<dbReference type="EMBL" id="AL024494">
    <property type="status" value="NOT_ANNOTATED_CDS"/>
    <property type="molecule type" value="Genomic_DNA"/>
</dbReference>
<dbReference type="EMBL" id="BC112212">
    <property type="protein sequence ID" value="AAI12213.1"/>
    <property type="molecule type" value="mRNA"/>
</dbReference>
<dbReference type="EMBL" id="BC113633">
    <property type="protein sequence ID" value="AAI13634.1"/>
    <property type="molecule type" value="mRNA"/>
</dbReference>
<dbReference type="CCDS" id="CCDS33640.1"/>
<dbReference type="RefSeq" id="NP_001290437.1">
    <property type="nucleotide sequence ID" value="NM_001303508.2"/>
</dbReference>
<dbReference type="RefSeq" id="XP_047297554.1">
    <property type="nucleotide sequence ID" value="XM_047441598.1"/>
</dbReference>
<dbReference type="RefSeq" id="XP_054182106.1">
    <property type="nucleotide sequence ID" value="XM_054326131.1"/>
</dbReference>
<dbReference type="SMR" id="Q2M1V0"/>
<dbReference type="BioGRID" id="124838">
    <property type="interactions" value="33"/>
</dbReference>
<dbReference type="FunCoup" id="Q2M1V0">
    <property type="interactions" value="269"/>
</dbReference>
<dbReference type="IntAct" id="Q2M1V0">
    <property type="interactions" value="29"/>
</dbReference>
<dbReference type="STRING" id="9606.ENSP00000311492"/>
<dbReference type="GlyGen" id="Q2M1V0">
    <property type="glycosylation" value="1 site"/>
</dbReference>
<dbReference type="iPTMnet" id="Q2M1V0"/>
<dbReference type="PhosphoSitePlus" id="Q2M1V0"/>
<dbReference type="BioMuta" id="ISX"/>
<dbReference type="DMDM" id="150387849"/>
<dbReference type="MassIVE" id="Q2M1V0"/>
<dbReference type="PaxDb" id="9606-ENSP00000311492"/>
<dbReference type="Antibodypedia" id="25329">
    <property type="antibodies" value="66 antibodies from 15 providers"/>
</dbReference>
<dbReference type="DNASU" id="91464"/>
<dbReference type="Ensembl" id="ENST00000308700.6">
    <property type="protein sequence ID" value="ENSP00000311492.6"/>
    <property type="gene ID" value="ENSG00000175329.13"/>
</dbReference>
<dbReference type="Ensembl" id="ENST00000404699.7">
    <property type="protein sequence ID" value="ENSP00000386037.1"/>
    <property type="gene ID" value="ENSG00000175329.13"/>
</dbReference>
<dbReference type="GeneID" id="91464"/>
<dbReference type="KEGG" id="hsa:91464"/>
<dbReference type="MANE-Select" id="ENST00000404699.7">
    <property type="protein sequence ID" value="ENSP00000386037.1"/>
    <property type="RefSeq nucleotide sequence ID" value="NM_001303508.2"/>
    <property type="RefSeq protein sequence ID" value="NP_001290437.1"/>
</dbReference>
<dbReference type="UCSC" id="uc003anj.4">
    <property type="organism name" value="human"/>
</dbReference>
<dbReference type="AGR" id="HGNC:28084"/>
<dbReference type="CTD" id="91464"/>
<dbReference type="DisGeNET" id="91464"/>
<dbReference type="GeneCards" id="ISX"/>
<dbReference type="HGNC" id="HGNC:28084">
    <property type="gene designation" value="ISX"/>
</dbReference>
<dbReference type="HPA" id="ENSG00000175329">
    <property type="expression patterns" value="Tissue enriched (intestine)"/>
</dbReference>
<dbReference type="MIM" id="612019">
    <property type="type" value="gene"/>
</dbReference>
<dbReference type="neXtProt" id="NX_Q2M1V0"/>
<dbReference type="OpenTargets" id="ENSG00000175329"/>
<dbReference type="PharmGKB" id="PA147357909"/>
<dbReference type="VEuPathDB" id="HostDB:ENSG00000175329"/>
<dbReference type="eggNOG" id="KOG0490">
    <property type="taxonomic scope" value="Eukaryota"/>
</dbReference>
<dbReference type="GeneTree" id="ENSGT00940000161702"/>
<dbReference type="HOGENOM" id="CLU_079373_0_0_1"/>
<dbReference type="InParanoid" id="Q2M1V0"/>
<dbReference type="OMA" id="CHPWETQ"/>
<dbReference type="OrthoDB" id="6159439at2759"/>
<dbReference type="PAN-GO" id="Q2M1V0">
    <property type="GO annotations" value="4 GO annotations based on evolutionary models"/>
</dbReference>
<dbReference type="PhylomeDB" id="Q2M1V0"/>
<dbReference type="TreeFam" id="TF315976"/>
<dbReference type="PathwayCommons" id="Q2M1V0"/>
<dbReference type="SignaLink" id="Q2M1V0"/>
<dbReference type="BioGRID-ORCS" id="91464">
    <property type="hits" value="11 hits in 1163 CRISPR screens"/>
</dbReference>
<dbReference type="GenomeRNAi" id="91464"/>
<dbReference type="Pharos" id="Q2M1V0">
    <property type="development level" value="Tbio"/>
</dbReference>
<dbReference type="PRO" id="PR:Q2M1V0"/>
<dbReference type="Proteomes" id="UP000005640">
    <property type="component" value="Chromosome 22"/>
</dbReference>
<dbReference type="RNAct" id="Q2M1V0">
    <property type="molecule type" value="protein"/>
</dbReference>
<dbReference type="Bgee" id="ENSG00000175329">
    <property type="expression patterns" value="Expressed in ileal mucosa and 25 other cell types or tissues"/>
</dbReference>
<dbReference type="GO" id="GO:0000785">
    <property type="term" value="C:chromatin"/>
    <property type="evidence" value="ECO:0000247"/>
    <property type="project" value="NTNU_SB"/>
</dbReference>
<dbReference type="GO" id="GO:0005634">
    <property type="term" value="C:nucleus"/>
    <property type="evidence" value="ECO:0007669"/>
    <property type="project" value="UniProtKB-SubCell"/>
</dbReference>
<dbReference type="GO" id="GO:0000981">
    <property type="term" value="F:DNA-binding transcription factor activity, RNA polymerase II-specific"/>
    <property type="evidence" value="ECO:0000247"/>
    <property type="project" value="NTNU_SB"/>
</dbReference>
<dbReference type="GO" id="GO:0000977">
    <property type="term" value="F:RNA polymerase II transcription regulatory region sequence-specific DNA binding"/>
    <property type="evidence" value="ECO:0000318"/>
    <property type="project" value="GO_Central"/>
</dbReference>
<dbReference type="GO" id="GO:1990837">
    <property type="term" value="F:sequence-specific double-stranded DNA binding"/>
    <property type="evidence" value="ECO:0000314"/>
    <property type="project" value="ARUK-UCL"/>
</dbReference>
<dbReference type="GO" id="GO:0006357">
    <property type="term" value="P:regulation of transcription by RNA polymerase II"/>
    <property type="evidence" value="ECO:0000318"/>
    <property type="project" value="GO_Central"/>
</dbReference>
<dbReference type="CDD" id="cd00086">
    <property type="entry name" value="homeodomain"/>
    <property type="match status" value="1"/>
</dbReference>
<dbReference type="FunFam" id="1.10.10.60:FF:000369">
    <property type="entry name" value="Intestine specific homeobox"/>
    <property type="match status" value="1"/>
</dbReference>
<dbReference type="Gene3D" id="1.10.10.60">
    <property type="entry name" value="Homeodomain-like"/>
    <property type="match status" value="1"/>
</dbReference>
<dbReference type="InterPro" id="IPR001356">
    <property type="entry name" value="HD"/>
</dbReference>
<dbReference type="InterPro" id="IPR017970">
    <property type="entry name" value="Homeobox_CS"/>
</dbReference>
<dbReference type="InterPro" id="IPR009057">
    <property type="entry name" value="Homeodomain-like_sf"/>
</dbReference>
<dbReference type="InterPro" id="IPR050649">
    <property type="entry name" value="Paired_Homeobox_TFs"/>
</dbReference>
<dbReference type="PANTHER" id="PTHR24329">
    <property type="entry name" value="HOMEOBOX PROTEIN ARISTALESS"/>
    <property type="match status" value="1"/>
</dbReference>
<dbReference type="PANTHER" id="PTHR24329:SF362">
    <property type="entry name" value="INTESTINE-SPECIFIC HOMEOBOX"/>
    <property type="match status" value="1"/>
</dbReference>
<dbReference type="Pfam" id="PF00046">
    <property type="entry name" value="Homeodomain"/>
    <property type="match status" value="1"/>
</dbReference>
<dbReference type="SMART" id="SM00389">
    <property type="entry name" value="HOX"/>
    <property type="match status" value="1"/>
</dbReference>
<dbReference type="SUPFAM" id="SSF46689">
    <property type="entry name" value="Homeodomain-like"/>
    <property type="match status" value="1"/>
</dbReference>
<dbReference type="PROSITE" id="PS00027">
    <property type="entry name" value="HOMEOBOX_1"/>
    <property type="match status" value="1"/>
</dbReference>
<dbReference type="PROSITE" id="PS50071">
    <property type="entry name" value="HOMEOBOX_2"/>
    <property type="match status" value="1"/>
</dbReference>
<keyword id="KW-0010">Activator</keyword>
<keyword id="KW-0238">DNA-binding</keyword>
<keyword id="KW-0371">Homeobox</keyword>
<keyword id="KW-0539">Nucleus</keyword>
<keyword id="KW-1185">Reference proteome</keyword>
<keyword id="KW-0804">Transcription</keyword>
<keyword id="KW-0805">Transcription regulation</keyword>
<name>ISX_HUMAN</name>
<accession>Q2M1V0</accession>
<accession>Q68DJ5</accession>
<gene>
    <name type="primary">ISX</name>
    <name type="synonym">RAXLX</name>
</gene>
<reference key="1">
    <citation type="journal article" date="2007" name="BMC Genomics">
        <title>The full-ORF clone resource of the German cDNA consortium.</title>
        <authorList>
            <person name="Bechtel S."/>
            <person name="Rosenfelder H."/>
            <person name="Duda A."/>
            <person name="Schmidt C.P."/>
            <person name="Ernst U."/>
            <person name="Wellenreuther R."/>
            <person name="Mehrle A."/>
            <person name="Schuster C."/>
            <person name="Bahr A."/>
            <person name="Bloecker H."/>
            <person name="Heubner D."/>
            <person name="Hoerlein A."/>
            <person name="Michel G."/>
            <person name="Wedler H."/>
            <person name="Koehrer K."/>
            <person name="Ottenwaelder B."/>
            <person name="Poustka A."/>
            <person name="Wiemann S."/>
            <person name="Schupp I."/>
        </authorList>
    </citation>
    <scope>NUCLEOTIDE SEQUENCE [LARGE SCALE MRNA]</scope>
    <source>
        <tissue>Colon carcinoma</tissue>
    </source>
</reference>
<reference key="2">
    <citation type="journal article" date="1999" name="Nature">
        <title>The DNA sequence of human chromosome 22.</title>
        <authorList>
            <person name="Dunham I."/>
            <person name="Hunt A.R."/>
            <person name="Collins J.E."/>
            <person name="Bruskiewich R."/>
            <person name="Beare D.M."/>
            <person name="Clamp M."/>
            <person name="Smink L.J."/>
            <person name="Ainscough R."/>
            <person name="Almeida J.P."/>
            <person name="Babbage A.K."/>
            <person name="Bagguley C."/>
            <person name="Bailey J."/>
            <person name="Barlow K.F."/>
            <person name="Bates K.N."/>
            <person name="Beasley O.P."/>
            <person name="Bird C.P."/>
            <person name="Blakey S.E."/>
            <person name="Bridgeman A.M."/>
            <person name="Buck D."/>
            <person name="Burgess J."/>
            <person name="Burrill W.D."/>
            <person name="Burton J."/>
            <person name="Carder C."/>
            <person name="Carter N.P."/>
            <person name="Chen Y."/>
            <person name="Clark G."/>
            <person name="Clegg S.M."/>
            <person name="Cobley V.E."/>
            <person name="Cole C.G."/>
            <person name="Collier R.E."/>
            <person name="Connor R."/>
            <person name="Conroy D."/>
            <person name="Corby N.R."/>
            <person name="Coville G.J."/>
            <person name="Cox A.V."/>
            <person name="Davis J."/>
            <person name="Dawson E."/>
            <person name="Dhami P.D."/>
            <person name="Dockree C."/>
            <person name="Dodsworth S.J."/>
            <person name="Durbin R.M."/>
            <person name="Ellington A.G."/>
            <person name="Evans K.L."/>
            <person name="Fey J.M."/>
            <person name="Fleming K."/>
            <person name="French L."/>
            <person name="Garner A.A."/>
            <person name="Gilbert J.G.R."/>
            <person name="Goward M.E."/>
            <person name="Grafham D.V."/>
            <person name="Griffiths M.N.D."/>
            <person name="Hall C."/>
            <person name="Hall R.E."/>
            <person name="Hall-Tamlyn G."/>
            <person name="Heathcott R.W."/>
            <person name="Ho S."/>
            <person name="Holmes S."/>
            <person name="Hunt S.E."/>
            <person name="Jones M.C."/>
            <person name="Kershaw J."/>
            <person name="Kimberley A.M."/>
            <person name="King A."/>
            <person name="Laird G.K."/>
            <person name="Langford C.F."/>
            <person name="Leversha M.A."/>
            <person name="Lloyd C."/>
            <person name="Lloyd D.M."/>
            <person name="Martyn I.D."/>
            <person name="Mashreghi-Mohammadi M."/>
            <person name="Matthews L.H."/>
            <person name="Mccann O.T."/>
            <person name="Mcclay J."/>
            <person name="Mclaren S."/>
            <person name="McMurray A.A."/>
            <person name="Milne S.A."/>
            <person name="Mortimore B.J."/>
            <person name="Odell C.N."/>
            <person name="Pavitt R."/>
            <person name="Pearce A.V."/>
            <person name="Pearson D."/>
            <person name="Phillimore B.J.C.T."/>
            <person name="Phillips S.H."/>
            <person name="Plumb R.W."/>
            <person name="Ramsay H."/>
            <person name="Ramsey Y."/>
            <person name="Rogers L."/>
            <person name="Ross M.T."/>
            <person name="Scott C.E."/>
            <person name="Sehra H.K."/>
            <person name="Skuce C.D."/>
            <person name="Smalley S."/>
            <person name="Smith M.L."/>
            <person name="Soderlund C."/>
            <person name="Spragon L."/>
            <person name="Steward C.A."/>
            <person name="Sulston J.E."/>
            <person name="Swann R.M."/>
            <person name="Vaudin M."/>
            <person name="Wall M."/>
            <person name="Wallis J.M."/>
            <person name="Whiteley M.N."/>
            <person name="Willey D.L."/>
            <person name="Williams L."/>
            <person name="Williams S.A."/>
            <person name="Williamson H."/>
            <person name="Wilmer T.E."/>
            <person name="Wilming L."/>
            <person name="Wright C.L."/>
            <person name="Hubbard T."/>
            <person name="Bentley D.R."/>
            <person name="Beck S."/>
            <person name="Rogers J."/>
            <person name="Shimizu N."/>
            <person name="Minoshima S."/>
            <person name="Kawasaki K."/>
            <person name="Sasaki T."/>
            <person name="Asakawa S."/>
            <person name="Kudoh J."/>
            <person name="Shintani A."/>
            <person name="Shibuya K."/>
            <person name="Yoshizaki Y."/>
            <person name="Aoki N."/>
            <person name="Mitsuyama S."/>
            <person name="Roe B.A."/>
            <person name="Chen F."/>
            <person name="Chu L."/>
            <person name="Crabtree J."/>
            <person name="Deschamps S."/>
            <person name="Do A."/>
            <person name="Do T."/>
            <person name="Dorman A."/>
            <person name="Fang F."/>
            <person name="Fu Y."/>
            <person name="Hu P."/>
            <person name="Hua A."/>
            <person name="Kenton S."/>
            <person name="Lai H."/>
            <person name="Lao H.I."/>
            <person name="Lewis J."/>
            <person name="Lewis S."/>
            <person name="Lin S.-P."/>
            <person name="Loh P."/>
            <person name="Malaj E."/>
            <person name="Nguyen T."/>
            <person name="Pan H."/>
            <person name="Phan S."/>
            <person name="Qi S."/>
            <person name="Qian Y."/>
            <person name="Ray L."/>
            <person name="Ren Q."/>
            <person name="Shaull S."/>
            <person name="Sloan D."/>
            <person name="Song L."/>
            <person name="Wang Q."/>
            <person name="Wang Y."/>
            <person name="Wang Z."/>
            <person name="White J."/>
            <person name="Willingham D."/>
            <person name="Wu H."/>
            <person name="Yao Z."/>
            <person name="Zhan M."/>
            <person name="Zhang G."/>
            <person name="Chissoe S."/>
            <person name="Murray J."/>
            <person name="Miller N."/>
            <person name="Minx P."/>
            <person name="Fulton R."/>
            <person name="Johnson D."/>
            <person name="Bemis G."/>
            <person name="Bentley D."/>
            <person name="Bradshaw H."/>
            <person name="Bourne S."/>
            <person name="Cordes M."/>
            <person name="Du Z."/>
            <person name="Fulton L."/>
            <person name="Goela D."/>
            <person name="Graves T."/>
            <person name="Hawkins J."/>
            <person name="Hinds K."/>
            <person name="Kemp K."/>
            <person name="Latreille P."/>
            <person name="Layman D."/>
            <person name="Ozersky P."/>
            <person name="Rohlfing T."/>
            <person name="Scheet P."/>
            <person name="Walker C."/>
            <person name="Wamsley A."/>
            <person name="Wohldmann P."/>
            <person name="Pepin K."/>
            <person name="Nelson J."/>
            <person name="Korf I."/>
            <person name="Bedell J.A."/>
            <person name="Hillier L.W."/>
            <person name="Mardis E."/>
            <person name="Waterston R."/>
            <person name="Wilson R."/>
            <person name="Emanuel B.S."/>
            <person name="Shaikh T."/>
            <person name="Kurahashi H."/>
            <person name="Saitta S."/>
            <person name="Budarf M.L."/>
            <person name="McDermid H.E."/>
            <person name="Johnson A."/>
            <person name="Wong A.C.C."/>
            <person name="Morrow B.E."/>
            <person name="Edelmann L."/>
            <person name="Kim U.J."/>
            <person name="Shizuya H."/>
            <person name="Simon M.I."/>
            <person name="Dumanski J.P."/>
            <person name="Peyrard M."/>
            <person name="Kedra D."/>
            <person name="Seroussi E."/>
            <person name="Fransson I."/>
            <person name="Tapia I."/>
            <person name="Bruder C.E."/>
            <person name="O'Brien K.P."/>
            <person name="Wilkinson P."/>
            <person name="Bodenteich A."/>
            <person name="Hartman K."/>
            <person name="Hu X."/>
            <person name="Khan A.S."/>
            <person name="Lane L."/>
            <person name="Tilahun Y."/>
            <person name="Wright H."/>
        </authorList>
    </citation>
    <scope>NUCLEOTIDE SEQUENCE [LARGE SCALE GENOMIC DNA]</scope>
</reference>
<reference key="3">
    <citation type="journal article" date="2004" name="Genome Res.">
        <title>The status, quality, and expansion of the NIH full-length cDNA project: the Mammalian Gene Collection (MGC).</title>
        <authorList>
            <consortium name="The MGC Project Team"/>
        </authorList>
    </citation>
    <scope>NUCLEOTIDE SEQUENCE [LARGE SCALE MRNA]</scope>
    <scope>VARIANTS GLY-28 AND SER-57</scope>
</reference>
<organism>
    <name type="scientific">Homo sapiens</name>
    <name type="common">Human</name>
    <dbReference type="NCBI Taxonomy" id="9606"/>
    <lineage>
        <taxon>Eukaryota</taxon>
        <taxon>Metazoa</taxon>
        <taxon>Chordata</taxon>
        <taxon>Craniata</taxon>
        <taxon>Vertebrata</taxon>
        <taxon>Euteleostomi</taxon>
        <taxon>Mammalia</taxon>
        <taxon>Eutheria</taxon>
        <taxon>Euarchontoglires</taxon>
        <taxon>Primates</taxon>
        <taxon>Haplorrhini</taxon>
        <taxon>Catarrhini</taxon>
        <taxon>Hominidae</taxon>
        <taxon>Homo</taxon>
    </lineage>
</organism>
<protein>
    <recommendedName>
        <fullName>Intestine-specific homeobox</fullName>
    </recommendedName>
    <alternativeName>
        <fullName>RAX-like homeobox</fullName>
    </alternativeName>
</protein>
<comment type="function">
    <text evidence="1">Transcription factor that regulates gene expression in intestine. May participate in vitamin A metabolism most likely by regulating BCO1 expression in the intestine (By similarity).</text>
</comment>
<comment type="interaction">
    <interactant intactId="EBI-6426064">
        <id>Q2M1V0</id>
    </interactant>
    <interactant intactId="EBI-724310">
        <id>Q15038</id>
        <label>DAZAP2</label>
    </interactant>
    <organismsDiffer>false</organismsDiffer>
    <experiments>3</experiments>
</comment>
<comment type="interaction">
    <interactant intactId="EBI-6426064">
        <id>Q2M1V0</id>
    </interactant>
    <interactant intactId="EBI-19954058">
        <id>O15499</id>
        <label>GSC2</label>
    </interactant>
    <organismsDiffer>false</organismsDiffer>
    <experiments>3</experiments>
</comment>
<comment type="interaction">
    <interactant intactId="EBI-6426064">
        <id>Q2M1V0</id>
    </interactant>
    <interactant intactId="EBI-12029004">
        <id>P78424</id>
        <label>POU6F2</label>
    </interactant>
    <organismsDiffer>false</organismsDiffer>
    <experiments>3</experiments>
</comment>
<comment type="interaction">
    <interactant intactId="EBI-6426064">
        <id>Q2M1V0</id>
    </interactant>
    <interactant intactId="EBI-6422642">
        <id>Q01974</id>
        <label>ROR2</label>
    </interactant>
    <organismsDiffer>false</organismsDiffer>
    <experiments>3</experiments>
</comment>
<comment type="interaction">
    <interactant intactId="EBI-6426064">
        <id>Q2M1V0</id>
    </interactant>
    <interactant intactId="EBI-2514383">
        <id>Q5T6F2</id>
        <label>UBAP2</label>
    </interactant>
    <organismsDiffer>false</organismsDiffer>
    <experiments>3</experiments>
</comment>
<comment type="subcellular location">
    <subcellularLocation>
        <location evidence="2">Nucleus</location>
    </subcellularLocation>
</comment>
<sequence length="245" mass="27011">MCAEVGPALCRGMERNSLGCCEAPKKLSLSFSIEAILKRPARRSDMDRPEGPGEEGPGEAAASGSGLEKPPKDQPQEGRKSKRRVRTTFTTEQLHELEKIFHFTHYPDVHIRSQLAARINLPEARVQIWFQNQRAKWRKQEKIGNLGAPQQLSEASVALPTNLDVAGPTWTSTALRRLAPPTSCCPSAQDQLASAWFPAWITLLPAHPWETQPVPGLPIHQTCIPVLCILPPPHPKWGSICATST</sequence>
<feature type="chain" id="PRO_0000288602" description="Intestine-specific homeobox">
    <location>
        <begin position="1"/>
        <end position="245"/>
    </location>
</feature>
<feature type="DNA-binding region" description="Homeobox" evidence="2">
    <location>
        <begin position="82"/>
        <end position="141"/>
    </location>
</feature>
<feature type="region of interest" description="Disordered" evidence="3">
    <location>
        <begin position="38"/>
        <end position="86"/>
    </location>
</feature>
<feature type="compositionally biased region" description="Basic and acidic residues" evidence="3">
    <location>
        <begin position="42"/>
        <end position="51"/>
    </location>
</feature>
<feature type="compositionally biased region" description="Basic and acidic residues" evidence="3">
    <location>
        <begin position="69"/>
        <end position="79"/>
    </location>
</feature>
<feature type="sequence variant" id="VAR_032448" description="In dbSNP:rs361863." evidence="4">
    <original>S</original>
    <variation>G</variation>
    <location>
        <position position="28"/>
    </location>
</feature>
<feature type="sequence variant" id="VAR_032449" description="In dbSNP:rs362090." evidence="4">
    <original>P</original>
    <variation>S</variation>
    <location>
        <position position="57"/>
    </location>
</feature>
<feature type="sequence variant" id="VAR_032450" description="In dbSNP:rs8140287.">
    <original>R</original>
    <variation>Q</variation>
    <location>
        <position position="83"/>
    </location>
</feature>
<feature type="sequence variant" id="VAR_032451" description="In dbSNP:rs7291048.">
    <original>A</original>
    <variation>V</variation>
    <location>
        <position position="158"/>
    </location>
</feature>